<keyword id="KW-0032">Aminotransferase</keyword>
<keyword id="KW-0663">Pyridoxal phosphate</keyword>
<keyword id="KW-1185">Reference proteome</keyword>
<keyword id="KW-0808">Transferase</keyword>
<dbReference type="EC" id="2.6.1.83" evidence="1"/>
<dbReference type="EMBL" id="CP001124">
    <property type="protein sequence ID" value="ACH41042.1"/>
    <property type="molecule type" value="Genomic_DNA"/>
</dbReference>
<dbReference type="RefSeq" id="WP_012532479.1">
    <property type="nucleotide sequence ID" value="NC_011146.1"/>
</dbReference>
<dbReference type="SMR" id="B5EGX2"/>
<dbReference type="STRING" id="404380.Gbem_4052"/>
<dbReference type="KEGG" id="gbm:Gbem_4052"/>
<dbReference type="eggNOG" id="COG0436">
    <property type="taxonomic scope" value="Bacteria"/>
</dbReference>
<dbReference type="HOGENOM" id="CLU_051433_0_0_7"/>
<dbReference type="OrthoDB" id="9804474at2"/>
<dbReference type="UniPathway" id="UPA00034">
    <property type="reaction ID" value="UER00466"/>
</dbReference>
<dbReference type="Proteomes" id="UP000008825">
    <property type="component" value="Chromosome"/>
</dbReference>
<dbReference type="GO" id="GO:0010285">
    <property type="term" value="F:L,L-diaminopimelate aminotransferase activity"/>
    <property type="evidence" value="ECO:0007669"/>
    <property type="project" value="UniProtKB-EC"/>
</dbReference>
<dbReference type="GO" id="GO:0030170">
    <property type="term" value="F:pyridoxal phosphate binding"/>
    <property type="evidence" value="ECO:0007669"/>
    <property type="project" value="InterPro"/>
</dbReference>
<dbReference type="GO" id="GO:0009089">
    <property type="term" value="P:lysine biosynthetic process via diaminopimelate"/>
    <property type="evidence" value="ECO:0007669"/>
    <property type="project" value="UniProtKB-UniPathway"/>
</dbReference>
<dbReference type="CDD" id="cd00609">
    <property type="entry name" value="AAT_like"/>
    <property type="match status" value="1"/>
</dbReference>
<dbReference type="FunFam" id="3.40.640.10:FF:000099">
    <property type="entry name" value="LL-diaminopimelate aminotransferase, chloroplastic"/>
    <property type="match status" value="1"/>
</dbReference>
<dbReference type="Gene3D" id="3.90.1150.10">
    <property type="entry name" value="Aspartate Aminotransferase, domain 1"/>
    <property type="match status" value="1"/>
</dbReference>
<dbReference type="Gene3D" id="3.40.640.10">
    <property type="entry name" value="Type I PLP-dependent aspartate aminotransferase-like (Major domain)"/>
    <property type="match status" value="1"/>
</dbReference>
<dbReference type="HAMAP" id="MF_01642">
    <property type="entry name" value="DapL_aminotrans_1"/>
    <property type="match status" value="1"/>
</dbReference>
<dbReference type="InterPro" id="IPR004839">
    <property type="entry name" value="Aminotransferase_I/II_large"/>
</dbReference>
<dbReference type="InterPro" id="IPR019942">
    <property type="entry name" value="DapL/ALD1"/>
</dbReference>
<dbReference type="InterPro" id="IPR015424">
    <property type="entry name" value="PyrdxlP-dep_Trfase"/>
</dbReference>
<dbReference type="InterPro" id="IPR015421">
    <property type="entry name" value="PyrdxlP-dep_Trfase_major"/>
</dbReference>
<dbReference type="InterPro" id="IPR015422">
    <property type="entry name" value="PyrdxlP-dep_Trfase_small"/>
</dbReference>
<dbReference type="NCBIfam" id="TIGR03542">
    <property type="entry name" value="DAPAT_plant"/>
    <property type="match status" value="1"/>
</dbReference>
<dbReference type="PANTHER" id="PTHR43144">
    <property type="entry name" value="AMINOTRANSFERASE"/>
    <property type="match status" value="1"/>
</dbReference>
<dbReference type="Pfam" id="PF00155">
    <property type="entry name" value="Aminotran_1_2"/>
    <property type="match status" value="1"/>
</dbReference>
<dbReference type="SUPFAM" id="SSF53383">
    <property type="entry name" value="PLP-dependent transferases"/>
    <property type="match status" value="1"/>
</dbReference>
<sequence length="411" mass="45255">MAKINDNYLKLKAGYLFPEIGRRVRAFAAANPEAKVIRLGIGDVTQPLTPTILKAFHDAVDDLASENSFMGYGPEQGYDFLIDAIIEKSYKPLGVDLKTTEMFISDGSKCDCANILDIFALDNTVAIGDPVYPVYNDTNVMIGRTGDADDKGYYKGLVYMPCTEENGFFPAYPKEKVDMIYLCFPNNPTGAVATKAQLKGWVDYALANDSIILFDAAYEAFITDPSIPHSIYEVEGAKKCAIEFRSFSKTAGFTGVRCGLVVVPDELEGTTSNGEKYSFNKLWLRRQTTKFNGASYPVQKAAAAVYTEQGWKETQANIDYYMENARIIREGLSAAGVTVYGGVNAPYIWLKTPAGLTSWDFFDKLLNDCHVVGTPGSGFGPSGEGYFRLSAFGNRDNVVEAVERIKKNLKK</sequence>
<feature type="chain" id="PRO_1000186867" description="LL-diaminopimelate aminotransferase">
    <location>
        <begin position="1"/>
        <end position="411"/>
    </location>
</feature>
<feature type="binding site" evidence="1">
    <location>
        <position position="15"/>
    </location>
    <ligand>
        <name>substrate</name>
    </ligand>
</feature>
<feature type="binding site" evidence="1">
    <location>
        <position position="42"/>
    </location>
    <ligand>
        <name>substrate</name>
    </ligand>
</feature>
<feature type="binding site" evidence="1">
    <location>
        <position position="72"/>
    </location>
    <ligand>
        <name>pyridoxal 5'-phosphate</name>
        <dbReference type="ChEBI" id="CHEBI:597326"/>
    </ligand>
</feature>
<feature type="binding site" evidence="1">
    <location>
        <begin position="108"/>
        <end position="109"/>
    </location>
    <ligand>
        <name>pyridoxal 5'-phosphate</name>
        <dbReference type="ChEBI" id="CHEBI:597326"/>
    </ligand>
</feature>
<feature type="binding site" evidence="1">
    <location>
        <position position="109"/>
    </location>
    <ligand>
        <name>substrate</name>
    </ligand>
</feature>
<feature type="binding site" evidence="1">
    <location>
        <position position="132"/>
    </location>
    <ligand>
        <name>pyridoxal 5'-phosphate</name>
        <dbReference type="ChEBI" id="CHEBI:597326"/>
    </ligand>
</feature>
<feature type="binding site" evidence="1">
    <location>
        <position position="132"/>
    </location>
    <ligand>
        <name>substrate</name>
    </ligand>
</feature>
<feature type="binding site" evidence="1">
    <location>
        <position position="187"/>
    </location>
    <ligand>
        <name>pyridoxal 5'-phosphate</name>
        <dbReference type="ChEBI" id="CHEBI:597326"/>
    </ligand>
</feature>
<feature type="binding site" evidence="1">
    <location>
        <position position="187"/>
    </location>
    <ligand>
        <name>substrate</name>
    </ligand>
</feature>
<feature type="binding site" evidence="1">
    <location>
        <position position="218"/>
    </location>
    <ligand>
        <name>pyridoxal 5'-phosphate</name>
        <dbReference type="ChEBI" id="CHEBI:597326"/>
    </ligand>
</feature>
<feature type="binding site" evidence="1">
    <location>
        <begin position="246"/>
        <end position="248"/>
    </location>
    <ligand>
        <name>pyridoxal 5'-phosphate</name>
        <dbReference type="ChEBI" id="CHEBI:597326"/>
    </ligand>
</feature>
<feature type="binding site" evidence="1">
    <location>
        <position position="257"/>
    </location>
    <ligand>
        <name>pyridoxal 5'-phosphate</name>
        <dbReference type="ChEBI" id="CHEBI:597326"/>
    </ligand>
</feature>
<feature type="binding site" evidence="1">
    <location>
        <position position="292"/>
    </location>
    <ligand>
        <name>pyridoxal 5'-phosphate</name>
        <dbReference type="ChEBI" id="CHEBI:597326"/>
    </ligand>
</feature>
<feature type="binding site" evidence="1">
    <location>
        <position position="292"/>
    </location>
    <ligand>
        <name>substrate</name>
    </ligand>
</feature>
<feature type="binding site" evidence="1">
    <location>
        <position position="388"/>
    </location>
    <ligand>
        <name>substrate</name>
    </ligand>
</feature>
<feature type="modified residue" description="N6-(pyridoxal phosphate)lysine" evidence="1">
    <location>
        <position position="249"/>
    </location>
</feature>
<gene>
    <name evidence="1" type="primary">dapL</name>
    <name type="ordered locus">Gbem_4052</name>
</gene>
<protein>
    <recommendedName>
        <fullName evidence="1">LL-diaminopimelate aminotransferase</fullName>
        <shortName evidence="1">DAP-AT</shortName>
        <shortName evidence="1">DAP-aminotransferase</shortName>
        <shortName evidence="1">LL-DAP-aminotransferase</shortName>
        <ecNumber evidence="1">2.6.1.83</ecNumber>
    </recommendedName>
</protein>
<proteinExistence type="inferred from homology"/>
<name>DAPAT_CITBB</name>
<evidence type="ECO:0000255" key="1">
    <source>
        <dbReference type="HAMAP-Rule" id="MF_01642"/>
    </source>
</evidence>
<comment type="function">
    <text evidence="1">Involved in the synthesis of meso-diaminopimelate (m-DAP or DL-DAP), required for both lysine and peptidoglycan biosynthesis. Catalyzes the direct conversion of tetrahydrodipicolinate to LL-diaminopimelate.</text>
</comment>
<comment type="catalytic activity">
    <reaction evidence="1">
        <text>(2S,6S)-2,6-diaminopimelate + 2-oxoglutarate = (S)-2,3,4,5-tetrahydrodipicolinate + L-glutamate + H2O + H(+)</text>
        <dbReference type="Rhea" id="RHEA:23988"/>
        <dbReference type="ChEBI" id="CHEBI:15377"/>
        <dbReference type="ChEBI" id="CHEBI:15378"/>
        <dbReference type="ChEBI" id="CHEBI:16810"/>
        <dbReference type="ChEBI" id="CHEBI:16845"/>
        <dbReference type="ChEBI" id="CHEBI:29985"/>
        <dbReference type="ChEBI" id="CHEBI:57609"/>
        <dbReference type="EC" id="2.6.1.83"/>
    </reaction>
</comment>
<comment type="cofactor">
    <cofactor evidence="1">
        <name>pyridoxal 5'-phosphate</name>
        <dbReference type="ChEBI" id="CHEBI:597326"/>
    </cofactor>
</comment>
<comment type="pathway">
    <text evidence="1">Amino-acid biosynthesis; L-lysine biosynthesis via DAP pathway; LL-2,6-diaminopimelate from (S)-tetrahydrodipicolinate (aminotransferase route): step 1/1.</text>
</comment>
<comment type="subunit">
    <text evidence="1">Homodimer.</text>
</comment>
<comment type="similarity">
    <text evidence="1">Belongs to the class-I pyridoxal-phosphate-dependent aminotransferase family. LL-diaminopimelate aminotransferase subfamily.</text>
</comment>
<reference key="1">
    <citation type="submission" date="2008-07" db="EMBL/GenBank/DDBJ databases">
        <title>Complete sequence of Geobacter bemidjiensis BEM.</title>
        <authorList>
            <consortium name="US DOE Joint Genome Institute"/>
            <person name="Lucas S."/>
            <person name="Copeland A."/>
            <person name="Lapidus A."/>
            <person name="Glavina del Rio T."/>
            <person name="Dalin E."/>
            <person name="Tice H."/>
            <person name="Bruce D."/>
            <person name="Goodwin L."/>
            <person name="Pitluck S."/>
            <person name="Kiss H."/>
            <person name="Brettin T."/>
            <person name="Detter J.C."/>
            <person name="Han C."/>
            <person name="Kuske C.R."/>
            <person name="Schmutz J."/>
            <person name="Larimer F."/>
            <person name="Land M."/>
            <person name="Hauser L."/>
            <person name="Kyrpides N."/>
            <person name="Lykidis A."/>
            <person name="Lovley D."/>
            <person name="Richardson P."/>
        </authorList>
    </citation>
    <scope>NUCLEOTIDE SEQUENCE [LARGE SCALE GENOMIC DNA]</scope>
    <source>
        <strain>ATCC BAA-1014 / DSM 16622 / JCM 12645 / Bem</strain>
    </source>
</reference>
<accession>B5EGX2</accession>
<organism>
    <name type="scientific">Citrifermentans bemidjiense (strain ATCC BAA-1014 / DSM 16622 / JCM 12645 / Bem)</name>
    <name type="common">Geobacter bemidjiensis</name>
    <dbReference type="NCBI Taxonomy" id="404380"/>
    <lineage>
        <taxon>Bacteria</taxon>
        <taxon>Pseudomonadati</taxon>
        <taxon>Thermodesulfobacteriota</taxon>
        <taxon>Desulfuromonadia</taxon>
        <taxon>Geobacterales</taxon>
        <taxon>Geobacteraceae</taxon>
        <taxon>Citrifermentans</taxon>
    </lineage>
</organism>